<accession>Q7VYR4</accession>
<proteinExistence type="inferred from homology"/>
<gene>
    <name evidence="1" type="primary">rimP</name>
    <name type="ordered locus">BP1245</name>
</gene>
<organism>
    <name type="scientific">Bordetella pertussis (strain Tohama I / ATCC BAA-589 / NCTC 13251)</name>
    <dbReference type="NCBI Taxonomy" id="257313"/>
    <lineage>
        <taxon>Bacteria</taxon>
        <taxon>Pseudomonadati</taxon>
        <taxon>Pseudomonadota</taxon>
        <taxon>Betaproteobacteria</taxon>
        <taxon>Burkholderiales</taxon>
        <taxon>Alcaligenaceae</taxon>
        <taxon>Bordetella</taxon>
    </lineage>
</organism>
<comment type="function">
    <text evidence="1">Required for maturation of 30S ribosomal subunits.</text>
</comment>
<comment type="subcellular location">
    <subcellularLocation>
        <location evidence="1">Cytoplasm</location>
    </subcellularLocation>
</comment>
<comment type="similarity">
    <text evidence="1">Belongs to the RimP family.</text>
</comment>
<sequence>MADLFALTEEALAGMDIELVDVERAAMGLLRVTIDRVDGVRIEDCEQVSRQLSRVYEVENIDYKRLEVGSPGVDRPLRNEAEFRRFAGERIEIKLREALDGRKVFSGTLRAPEADGASGQDDTAGAGKAVFGLEFEAKKNDIQVLSFTLDDIERAKLDPVLDFKGKKR</sequence>
<keyword id="KW-0963">Cytoplasm</keyword>
<keyword id="KW-1185">Reference proteome</keyword>
<keyword id="KW-0690">Ribosome biogenesis</keyword>
<evidence type="ECO:0000255" key="1">
    <source>
        <dbReference type="HAMAP-Rule" id="MF_01077"/>
    </source>
</evidence>
<reference key="1">
    <citation type="journal article" date="2003" name="Nat. Genet.">
        <title>Comparative analysis of the genome sequences of Bordetella pertussis, Bordetella parapertussis and Bordetella bronchiseptica.</title>
        <authorList>
            <person name="Parkhill J."/>
            <person name="Sebaihia M."/>
            <person name="Preston A."/>
            <person name="Murphy L.D."/>
            <person name="Thomson N.R."/>
            <person name="Harris D.E."/>
            <person name="Holden M.T.G."/>
            <person name="Churcher C.M."/>
            <person name="Bentley S.D."/>
            <person name="Mungall K.L."/>
            <person name="Cerdeno-Tarraga A.-M."/>
            <person name="Temple L."/>
            <person name="James K.D."/>
            <person name="Harris B."/>
            <person name="Quail M.A."/>
            <person name="Achtman M."/>
            <person name="Atkin R."/>
            <person name="Baker S."/>
            <person name="Basham D."/>
            <person name="Bason N."/>
            <person name="Cherevach I."/>
            <person name="Chillingworth T."/>
            <person name="Collins M."/>
            <person name="Cronin A."/>
            <person name="Davis P."/>
            <person name="Doggett J."/>
            <person name="Feltwell T."/>
            <person name="Goble A."/>
            <person name="Hamlin N."/>
            <person name="Hauser H."/>
            <person name="Holroyd S."/>
            <person name="Jagels K."/>
            <person name="Leather S."/>
            <person name="Moule S."/>
            <person name="Norberczak H."/>
            <person name="O'Neil S."/>
            <person name="Ormond D."/>
            <person name="Price C."/>
            <person name="Rabbinowitsch E."/>
            <person name="Rutter S."/>
            <person name="Sanders M."/>
            <person name="Saunders D."/>
            <person name="Seeger K."/>
            <person name="Sharp S."/>
            <person name="Simmonds M."/>
            <person name="Skelton J."/>
            <person name="Squares R."/>
            <person name="Squares S."/>
            <person name="Stevens K."/>
            <person name="Unwin L."/>
            <person name="Whitehead S."/>
            <person name="Barrell B.G."/>
            <person name="Maskell D.J."/>
        </authorList>
    </citation>
    <scope>NUCLEOTIDE SEQUENCE [LARGE SCALE GENOMIC DNA]</scope>
    <source>
        <strain>Tohama I / ATCC BAA-589 / NCTC 13251</strain>
    </source>
</reference>
<dbReference type="EMBL" id="BX640414">
    <property type="protein sequence ID" value="CAE41541.1"/>
    <property type="molecule type" value="Genomic_DNA"/>
</dbReference>
<dbReference type="RefSeq" id="NP_880017.1">
    <property type="nucleotide sequence ID" value="NC_002929.2"/>
</dbReference>
<dbReference type="RefSeq" id="WP_003810544.1">
    <property type="nucleotide sequence ID" value="NZ_CP039022.1"/>
</dbReference>
<dbReference type="SMR" id="Q7VYR4"/>
<dbReference type="STRING" id="257313.BP1245"/>
<dbReference type="PaxDb" id="257313-BP1245"/>
<dbReference type="GeneID" id="69601162"/>
<dbReference type="KEGG" id="bpe:BP1245"/>
<dbReference type="PATRIC" id="fig|257313.5.peg.1341"/>
<dbReference type="eggNOG" id="COG0779">
    <property type="taxonomic scope" value="Bacteria"/>
</dbReference>
<dbReference type="HOGENOM" id="CLU_070525_1_0_4"/>
<dbReference type="Proteomes" id="UP000002676">
    <property type="component" value="Chromosome"/>
</dbReference>
<dbReference type="GO" id="GO:0005829">
    <property type="term" value="C:cytosol"/>
    <property type="evidence" value="ECO:0007669"/>
    <property type="project" value="TreeGrafter"/>
</dbReference>
<dbReference type="GO" id="GO:0000028">
    <property type="term" value="P:ribosomal small subunit assembly"/>
    <property type="evidence" value="ECO:0007669"/>
    <property type="project" value="TreeGrafter"/>
</dbReference>
<dbReference type="GO" id="GO:0006412">
    <property type="term" value="P:translation"/>
    <property type="evidence" value="ECO:0007669"/>
    <property type="project" value="TreeGrafter"/>
</dbReference>
<dbReference type="CDD" id="cd01734">
    <property type="entry name" value="YlxS_C"/>
    <property type="match status" value="1"/>
</dbReference>
<dbReference type="Gene3D" id="2.30.30.180">
    <property type="entry name" value="Ribosome maturation factor RimP, C-terminal domain"/>
    <property type="match status" value="1"/>
</dbReference>
<dbReference type="Gene3D" id="3.30.300.70">
    <property type="entry name" value="RimP-like superfamily, N-terminal"/>
    <property type="match status" value="1"/>
</dbReference>
<dbReference type="HAMAP" id="MF_01077">
    <property type="entry name" value="RimP"/>
    <property type="match status" value="1"/>
</dbReference>
<dbReference type="InterPro" id="IPR003728">
    <property type="entry name" value="Ribosome_maturation_RimP"/>
</dbReference>
<dbReference type="InterPro" id="IPR028998">
    <property type="entry name" value="RimP_C"/>
</dbReference>
<dbReference type="InterPro" id="IPR036847">
    <property type="entry name" value="RimP_C_sf"/>
</dbReference>
<dbReference type="InterPro" id="IPR028989">
    <property type="entry name" value="RimP_N"/>
</dbReference>
<dbReference type="InterPro" id="IPR035956">
    <property type="entry name" value="RimP_N_sf"/>
</dbReference>
<dbReference type="NCBIfam" id="NF000929">
    <property type="entry name" value="PRK00092.2-1"/>
    <property type="match status" value="1"/>
</dbReference>
<dbReference type="PANTHER" id="PTHR33867">
    <property type="entry name" value="RIBOSOME MATURATION FACTOR RIMP"/>
    <property type="match status" value="1"/>
</dbReference>
<dbReference type="PANTHER" id="PTHR33867:SF1">
    <property type="entry name" value="RIBOSOME MATURATION FACTOR RIMP"/>
    <property type="match status" value="1"/>
</dbReference>
<dbReference type="Pfam" id="PF17384">
    <property type="entry name" value="DUF150_C"/>
    <property type="match status" value="1"/>
</dbReference>
<dbReference type="Pfam" id="PF02576">
    <property type="entry name" value="RimP_N"/>
    <property type="match status" value="1"/>
</dbReference>
<dbReference type="SUPFAM" id="SSF74942">
    <property type="entry name" value="YhbC-like, C-terminal domain"/>
    <property type="match status" value="1"/>
</dbReference>
<dbReference type="SUPFAM" id="SSF75420">
    <property type="entry name" value="YhbC-like, N-terminal domain"/>
    <property type="match status" value="1"/>
</dbReference>
<protein>
    <recommendedName>
        <fullName evidence="1">Ribosome maturation factor RimP</fullName>
    </recommendedName>
</protein>
<name>RIMP_BORPE</name>
<feature type="chain" id="PRO_0000181852" description="Ribosome maturation factor RimP">
    <location>
        <begin position="1"/>
        <end position="168"/>
    </location>
</feature>